<feature type="chain" id="PRO_0000335315" description="Ribosomal RNA small subunit methyltransferase G">
    <location>
        <begin position="1"/>
        <end position="228"/>
    </location>
</feature>
<feature type="binding site" evidence="1">
    <location>
        <position position="89"/>
    </location>
    <ligand>
        <name>S-adenosyl-L-methionine</name>
        <dbReference type="ChEBI" id="CHEBI:59789"/>
    </ligand>
</feature>
<feature type="binding site" evidence="1">
    <location>
        <position position="94"/>
    </location>
    <ligand>
        <name>S-adenosyl-L-methionine</name>
        <dbReference type="ChEBI" id="CHEBI:59789"/>
    </ligand>
</feature>
<feature type="binding site" evidence="1">
    <location>
        <begin position="140"/>
        <end position="141"/>
    </location>
    <ligand>
        <name>S-adenosyl-L-methionine</name>
        <dbReference type="ChEBI" id="CHEBI:59789"/>
    </ligand>
</feature>
<feature type="binding site" evidence="1">
    <location>
        <position position="159"/>
    </location>
    <ligand>
        <name>S-adenosyl-L-methionine</name>
        <dbReference type="ChEBI" id="CHEBI:59789"/>
    </ligand>
</feature>
<accession>Q1BR98</accession>
<organism>
    <name type="scientific">Burkholderia orbicola (strain AU 1054)</name>
    <dbReference type="NCBI Taxonomy" id="331271"/>
    <lineage>
        <taxon>Bacteria</taxon>
        <taxon>Pseudomonadati</taxon>
        <taxon>Pseudomonadota</taxon>
        <taxon>Betaproteobacteria</taxon>
        <taxon>Burkholderiales</taxon>
        <taxon>Burkholderiaceae</taxon>
        <taxon>Burkholderia</taxon>
        <taxon>Burkholderia cepacia complex</taxon>
        <taxon>Burkholderia orbicola</taxon>
    </lineage>
</organism>
<comment type="function">
    <text evidence="1">Specifically methylates the N7 position of guanine in position 527 of 16S rRNA.</text>
</comment>
<comment type="catalytic activity">
    <reaction evidence="1">
        <text>guanosine(527) in 16S rRNA + S-adenosyl-L-methionine = N(7)-methylguanosine(527) in 16S rRNA + S-adenosyl-L-homocysteine</text>
        <dbReference type="Rhea" id="RHEA:42732"/>
        <dbReference type="Rhea" id="RHEA-COMP:10209"/>
        <dbReference type="Rhea" id="RHEA-COMP:10210"/>
        <dbReference type="ChEBI" id="CHEBI:57856"/>
        <dbReference type="ChEBI" id="CHEBI:59789"/>
        <dbReference type="ChEBI" id="CHEBI:74269"/>
        <dbReference type="ChEBI" id="CHEBI:74480"/>
        <dbReference type="EC" id="2.1.1.170"/>
    </reaction>
</comment>
<comment type="subcellular location">
    <subcellularLocation>
        <location evidence="1">Cytoplasm</location>
    </subcellularLocation>
</comment>
<comment type="similarity">
    <text evidence="1">Belongs to the methyltransferase superfamily. RNA methyltransferase RsmG family.</text>
</comment>
<proteinExistence type="inferred from homology"/>
<gene>
    <name evidence="1" type="primary">rsmG</name>
    <name type="ordered locus">Bcen_2961</name>
</gene>
<name>RSMG_BURO1</name>
<sequence length="228" mass="24904">MTARRAPAVNRDVLEGMLVEGTAALDLTLTDTQRNQLLDYVALLGKWNAVYNLTAIRDPMQMLIQHILDSLSIVPHLRGRTSARVLDVGSGGGLPGIVLAIVEPGWQVTLNDIVQKKSAFQTQMRAELKLANLSVVTGRVESLQPGVEVPEKFDMIVSRAFADLSDFVKLARHLVAPGGSIWAMKGVHPDDEIARLPEGSRVTQTIRLAVPMLDAERHLFEVAVDDAN</sequence>
<protein>
    <recommendedName>
        <fullName evidence="1">Ribosomal RNA small subunit methyltransferase G</fullName>
        <ecNumber evidence="1">2.1.1.170</ecNumber>
    </recommendedName>
    <alternativeName>
        <fullName evidence="1">16S rRNA 7-methylguanosine methyltransferase</fullName>
        <shortName evidence="1">16S rRNA m7G methyltransferase</shortName>
    </alternativeName>
</protein>
<reference key="1">
    <citation type="submission" date="2006-05" db="EMBL/GenBank/DDBJ databases">
        <title>Complete sequence of chromosome 1 of Burkholderia cenocepacia AU 1054.</title>
        <authorList>
            <consortium name="US DOE Joint Genome Institute"/>
            <person name="Copeland A."/>
            <person name="Lucas S."/>
            <person name="Lapidus A."/>
            <person name="Barry K."/>
            <person name="Detter J.C."/>
            <person name="Glavina del Rio T."/>
            <person name="Hammon N."/>
            <person name="Israni S."/>
            <person name="Dalin E."/>
            <person name="Tice H."/>
            <person name="Pitluck S."/>
            <person name="Chain P."/>
            <person name="Malfatti S."/>
            <person name="Shin M."/>
            <person name="Vergez L."/>
            <person name="Schmutz J."/>
            <person name="Larimer F."/>
            <person name="Land M."/>
            <person name="Hauser L."/>
            <person name="Kyrpides N."/>
            <person name="Lykidis A."/>
            <person name="LiPuma J.J."/>
            <person name="Konstantinidis K."/>
            <person name="Tiedje J.M."/>
            <person name="Richardson P."/>
        </authorList>
    </citation>
    <scope>NUCLEOTIDE SEQUENCE [LARGE SCALE GENOMIC DNA]</scope>
    <source>
        <strain>AU 1054</strain>
    </source>
</reference>
<dbReference type="EC" id="2.1.1.170" evidence="1"/>
<dbReference type="EMBL" id="CP000378">
    <property type="protein sequence ID" value="ABF77857.1"/>
    <property type="molecule type" value="Genomic_DNA"/>
</dbReference>
<dbReference type="SMR" id="Q1BR98"/>
<dbReference type="HOGENOM" id="CLU_065341_2_0_4"/>
<dbReference type="GO" id="GO:0005829">
    <property type="term" value="C:cytosol"/>
    <property type="evidence" value="ECO:0007669"/>
    <property type="project" value="TreeGrafter"/>
</dbReference>
<dbReference type="GO" id="GO:0070043">
    <property type="term" value="F:rRNA (guanine-N7-)-methyltransferase activity"/>
    <property type="evidence" value="ECO:0007669"/>
    <property type="project" value="UniProtKB-UniRule"/>
</dbReference>
<dbReference type="CDD" id="cd02440">
    <property type="entry name" value="AdoMet_MTases"/>
    <property type="match status" value="1"/>
</dbReference>
<dbReference type="Gene3D" id="3.40.50.150">
    <property type="entry name" value="Vaccinia Virus protein VP39"/>
    <property type="match status" value="1"/>
</dbReference>
<dbReference type="HAMAP" id="MF_00074">
    <property type="entry name" value="16SrRNA_methyltr_G"/>
    <property type="match status" value="1"/>
</dbReference>
<dbReference type="InterPro" id="IPR003682">
    <property type="entry name" value="rRNA_ssu_MeTfrase_G"/>
</dbReference>
<dbReference type="InterPro" id="IPR029063">
    <property type="entry name" value="SAM-dependent_MTases_sf"/>
</dbReference>
<dbReference type="NCBIfam" id="TIGR00138">
    <property type="entry name" value="rsmG_gidB"/>
    <property type="match status" value="1"/>
</dbReference>
<dbReference type="PANTHER" id="PTHR31760">
    <property type="entry name" value="S-ADENOSYL-L-METHIONINE-DEPENDENT METHYLTRANSFERASES SUPERFAMILY PROTEIN"/>
    <property type="match status" value="1"/>
</dbReference>
<dbReference type="PANTHER" id="PTHR31760:SF0">
    <property type="entry name" value="S-ADENOSYL-L-METHIONINE-DEPENDENT METHYLTRANSFERASES SUPERFAMILY PROTEIN"/>
    <property type="match status" value="1"/>
</dbReference>
<dbReference type="Pfam" id="PF02527">
    <property type="entry name" value="GidB"/>
    <property type="match status" value="1"/>
</dbReference>
<dbReference type="PIRSF" id="PIRSF003078">
    <property type="entry name" value="GidB"/>
    <property type="match status" value="1"/>
</dbReference>
<dbReference type="SUPFAM" id="SSF53335">
    <property type="entry name" value="S-adenosyl-L-methionine-dependent methyltransferases"/>
    <property type="match status" value="1"/>
</dbReference>
<evidence type="ECO:0000255" key="1">
    <source>
        <dbReference type="HAMAP-Rule" id="MF_00074"/>
    </source>
</evidence>
<keyword id="KW-0963">Cytoplasm</keyword>
<keyword id="KW-0489">Methyltransferase</keyword>
<keyword id="KW-0698">rRNA processing</keyword>
<keyword id="KW-0949">S-adenosyl-L-methionine</keyword>
<keyword id="KW-0808">Transferase</keyword>